<protein>
    <recommendedName>
        <fullName evidence="7">Phenolphthiocerol/phthiocerol polyketide synthase subunit B</fullName>
        <ecNumber evidence="2">2.3.1.292</ecNumber>
    </recommendedName>
    <alternativeName>
        <fullName>(Phenol)carboxyphthiodiolenone synthase subunit B</fullName>
    </alternativeName>
    <alternativeName>
        <fullName>Beta-ketoacyl-acyl-carrier-protein synthase I</fullName>
    </alternativeName>
    <alternativeName>
        <fullName>Phthiocerol synthesis polyketide synthase type I PpsB</fullName>
    </alternativeName>
</protein>
<dbReference type="EC" id="2.3.1.292" evidence="2"/>
<dbReference type="EMBL" id="LT708304">
    <property type="protein sequence ID" value="SIU01578.1"/>
    <property type="molecule type" value="Genomic_DNA"/>
</dbReference>
<dbReference type="RefSeq" id="NP_856602.1">
    <property type="nucleotide sequence ID" value="NC_002945.3"/>
</dbReference>
<dbReference type="RefSeq" id="WP_003414835.1">
    <property type="nucleotide sequence ID" value="NC_002945.4"/>
</dbReference>
<dbReference type="SMR" id="Q7TXL9"/>
<dbReference type="KEGG" id="mbo:BQ2027_MB2957"/>
<dbReference type="PATRIC" id="fig|233413.5.peg.3245"/>
<dbReference type="BioCyc" id="MetaCyc:MONOMER-19627"/>
<dbReference type="UniPathway" id="UPA00094"/>
<dbReference type="Proteomes" id="UP000001419">
    <property type="component" value="Chromosome"/>
</dbReference>
<dbReference type="GO" id="GO:0034081">
    <property type="term" value="C:polyketide synthase complex"/>
    <property type="evidence" value="ECO:0000315"/>
    <property type="project" value="UniProtKB"/>
</dbReference>
<dbReference type="GO" id="GO:0004315">
    <property type="term" value="F:3-oxoacyl-[acyl-carrier-protein] synthase activity"/>
    <property type="evidence" value="ECO:0007669"/>
    <property type="project" value="InterPro"/>
</dbReference>
<dbReference type="GO" id="GO:0004312">
    <property type="term" value="F:fatty acid synthase activity"/>
    <property type="evidence" value="ECO:0007669"/>
    <property type="project" value="TreeGrafter"/>
</dbReference>
<dbReference type="GO" id="GO:0016491">
    <property type="term" value="F:oxidoreductase activity"/>
    <property type="evidence" value="ECO:0007669"/>
    <property type="project" value="UniProtKB-KW"/>
</dbReference>
<dbReference type="GO" id="GO:0031177">
    <property type="term" value="F:phosphopantetheine binding"/>
    <property type="evidence" value="ECO:0007669"/>
    <property type="project" value="InterPro"/>
</dbReference>
<dbReference type="GO" id="GO:0071766">
    <property type="term" value="P:Actinobacterium-type cell wall biogenesis"/>
    <property type="evidence" value="ECO:0000315"/>
    <property type="project" value="UniProtKB"/>
</dbReference>
<dbReference type="GO" id="GO:0006633">
    <property type="term" value="P:fatty acid biosynthetic process"/>
    <property type="evidence" value="ECO:0007669"/>
    <property type="project" value="UniProtKB-UniPathway"/>
</dbReference>
<dbReference type="GO" id="GO:0097041">
    <property type="term" value="P:phenolic phthiocerol biosynthetic process"/>
    <property type="evidence" value="ECO:0000315"/>
    <property type="project" value="UniProtKB"/>
</dbReference>
<dbReference type="GO" id="GO:0097040">
    <property type="term" value="P:phthiocerol biosynthetic process"/>
    <property type="evidence" value="ECO:0000315"/>
    <property type="project" value="UniProtKB"/>
</dbReference>
<dbReference type="CDD" id="cd05274">
    <property type="entry name" value="KR_FAS_SDR_x"/>
    <property type="match status" value="1"/>
</dbReference>
<dbReference type="CDD" id="cd00833">
    <property type="entry name" value="PKS"/>
    <property type="match status" value="1"/>
</dbReference>
<dbReference type="FunFam" id="3.30.70.250:FF:000003">
    <property type="entry name" value="Polyketide beta-ketoacyl synthase Pks3"/>
    <property type="match status" value="1"/>
</dbReference>
<dbReference type="FunFam" id="3.40.47.10:FF:000019">
    <property type="entry name" value="Polyketide synthase type I"/>
    <property type="match status" value="1"/>
</dbReference>
<dbReference type="FunFam" id="1.10.1200.10:FF:000007">
    <property type="entry name" value="Probable polyketide synthase pks17"/>
    <property type="match status" value="1"/>
</dbReference>
<dbReference type="Gene3D" id="3.40.47.10">
    <property type="match status" value="1"/>
</dbReference>
<dbReference type="Gene3D" id="1.10.1200.10">
    <property type="entry name" value="ACP-like"/>
    <property type="match status" value="1"/>
</dbReference>
<dbReference type="Gene3D" id="3.30.70.250">
    <property type="entry name" value="Malonyl-CoA ACP transacylase, ACP-binding"/>
    <property type="match status" value="1"/>
</dbReference>
<dbReference type="Gene3D" id="3.40.366.10">
    <property type="entry name" value="Malonyl-Coenzyme A Acyl Carrier Protein, domain 2"/>
    <property type="match status" value="1"/>
</dbReference>
<dbReference type="Gene3D" id="3.40.50.720">
    <property type="entry name" value="NAD(P)-binding Rossmann-like Domain"/>
    <property type="match status" value="1"/>
</dbReference>
<dbReference type="InterPro" id="IPR001227">
    <property type="entry name" value="Ac_transferase_dom_sf"/>
</dbReference>
<dbReference type="InterPro" id="IPR036736">
    <property type="entry name" value="ACP-like_sf"/>
</dbReference>
<dbReference type="InterPro" id="IPR014043">
    <property type="entry name" value="Acyl_transferase_dom"/>
</dbReference>
<dbReference type="InterPro" id="IPR016035">
    <property type="entry name" value="Acyl_Trfase/lysoPLipase"/>
</dbReference>
<dbReference type="InterPro" id="IPR018201">
    <property type="entry name" value="Ketoacyl_synth_AS"/>
</dbReference>
<dbReference type="InterPro" id="IPR014031">
    <property type="entry name" value="Ketoacyl_synth_C"/>
</dbReference>
<dbReference type="InterPro" id="IPR014030">
    <property type="entry name" value="Ketoacyl_synth_N"/>
</dbReference>
<dbReference type="InterPro" id="IPR016036">
    <property type="entry name" value="Malonyl_transacylase_ACP-bd"/>
</dbReference>
<dbReference type="InterPro" id="IPR036291">
    <property type="entry name" value="NAD(P)-bd_dom_sf"/>
</dbReference>
<dbReference type="InterPro" id="IPR032821">
    <property type="entry name" value="PKS_assoc"/>
</dbReference>
<dbReference type="InterPro" id="IPR020841">
    <property type="entry name" value="PKS_Beta-ketoAc_synthase_dom"/>
</dbReference>
<dbReference type="InterPro" id="IPR013968">
    <property type="entry name" value="PKS_KR"/>
</dbReference>
<dbReference type="InterPro" id="IPR050091">
    <property type="entry name" value="PKS_NRPS_Biosynth_Enz"/>
</dbReference>
<dbReference type="InterPro" id="IPR020806">
    <property type="entry name" value="PKS_PP-bd"/>
</dbReference>
<dbReference type="InterPro" id="IPR009081">
    <property type="entry name" value="PP-bd_ACP"/>
</dbReference>
<dbReference type="InterPro" id="IPR016039">
    <property type="entry name" value="Thiolase-like"/>
</dbReference>
<dbReference type="PANTHER" id="PTHR43775">
    <property type="entry name" value="FATTY ACID SYNTHASE"/>
    <property type="match status" value="1"/>
</dbReference>
<dbReference type="PANTHER" id="PTHR43775:SF37">
    <property type="entry name" value="SI:DKEY-61P9.11"/>
    <property type="match status" value="1"/>
</dbReference>
<dbReference type="Pfam" id="PF00698">
    <property type="entry name" value="Acyl_transf_1"/>
    <property type="match status" value="1"/>
</dbReference>
<dbReference type="Pfam" id="PF16197">
    <property type="entry name" value="KAsynt_C_assoc"/>
    <property type="match status" value="1"/>
</dbReference>
<dbReference type="Pfam" id="PF00109">
    <property type="entry name" value="ketoacyl-synt"/>
    <property type="match status" value="1"/>
</dbReference>
<dbReference type="Pfam" id="PF02801">
    <property type="entry name" value="Ketoacyl-synt_C"/>
    <property type="match status" value="1"/>
</dbReference>
<dbReference type="Pfam" id="PF08659">
    <property type="entry name" value="KR"/>
    <property type="match status" value="1"/>
</dbReference>
<dbReference type="Pfam" id="PF00550">
    <property type="entry name" value="PP-binding"/>
    <property type="match status" value="1"/>
</dbReference>
<dbReference type="SMART" id="SM00827">
    <property type="entry name" value="PKS_AT"/>
    <property type="match status" value="1"/>
</dbReference>
<dbReference type="SMART" id="SM00822">
    <property type="entry name" value="PKS_KR"/>
    <property type="match status" value="1"/>
</dbReference>
<dbReference type="SMART" id="SM00825">
    <property type="entry name" value="PKS_KS"/>
    <property type="match status" value="1"/>
</dbReference>
<dbReference type="SMART" id="SM00823">
    <property type="entry name" value="PKS_PP"/>
    <property type="match status" value="1"/>
</dbReference>
<dbReference type="SMART" id="SM01294">
    <property type="entry name" value="PKS_PP_betabranch"/>
    <property type="match status" value="1"/>
</dbReference>
<dbReference type="SUPFAM" id="SSF47336">
    <property type="entry name" value="ACP-like"/>
    <property type="match status" value="1"/>
</dbReference>
<dbReference type="SUPFAM" id="SSF52151">
    <property type="entry name" value="FabD/lysophospholipase-like"/>
    <property type="match status" value="1"/>
</dbReference>
<dbReference type="SUPFAM" id="SSF51735">
    <property type="entry name" value="NAD(P)-binding Rossmann-fold domains"/>
    <property type="match status" value="2"/>
</dbReference>
<dbReference type="SUPFAM" id="SSF55048">
    <property type="entry name" value="Probable ACP-binding domain of malonyl-CoA ACP transacylase"/>
    <property type="match status" value="1"/>
</dbReference>
<dbReference type="SUPFAM" id="SSF53901">
    <property type="entry name" value="Thiolase-like"/>
    <property type="match status" value="1"/>
</dbReference>
<dbReference type="PROSITE" id="PS50075">
    <property type="entry name" value="CARRIER"/>
    <property type="match status" value="1"/>
</dbReference>
<dbReference type="PROSITE" id="PS00606">
    <property type="entry name" value="KS3_1"/>
    <property type="match status" value="1"/>
</dbReference>
<dbReference type="PROSITE" id="PS52004">
    <property type="entry name" value="KS3_2"/>
    <property type="match status" value="1"/>
</dbReference>
<comment type="function">
    <text evidence="2 6">Part of the PpsABCDE complex involved in the biosynthesis of the lipid core common to phthiocerols and phenolphthiocerols by successive additions of malonyl-CoA or methylmalonyl-CoA extender units (PubMed:9201977). PpsA can accept as substrate the activated forms of either icosanoyl (C20), docosanoyl (C22) or lignoceroyl (C24) groups from FadD26, or a (4-hydroxyphenyl)-C17 or (4-hydroxyphenyl)-C19 fatty acyl from FadD29 (By similarity). PpsA initiates the biosynthesis and extends its substrate using a malonyl-CoA extender unit. The PpsB and PpsC proteins add the second and third malonyl-CoA extender units. PpsD adds an (R)-methylmalonyl unit and PpsE adds a second (R)-methylmalonyl unit. The incorporation of the methylmalonyl units results in formation of two branched methyl groups in the elongated product (By similarity).</text>
</comment>
<comment type="catalytic activity">
    <reaction evidence="2">
        <text>icosanoyl-[(phenol)carboxyphthiodiolenone synthase] + 2 (S)-methylmalonyl-CoA + 3 malonyl-CoA + 5 NADPH + 10 H(+) = C32-carboxyphthiodiolenone-[(phenol)carboxyphthiodiolenone synthase] + 5 CO2 + 5 NADP(+) + 5 CoA + 2 H2O</text>
        <dbReference type="Rhea" id="RHEA:57748"/>
        <dbReference type="Rhea" id="RHEA-COMP:14985"/>
        <dbReference type="Rhea" id="RHEA-COMP:14986"/>
        <dbReference type="ChEBI" id="CHEBI:15377"/>
        <dbReference type="ChEBI" id="CHEBI:15378"/>
        <dbReference type="ChEBI" id="CHEBI:16526"/>
        <dbReference type="ChEBI" id="CHEBI:57287"/>
        <dbReference type="ChEBI" id="CHEBI:57327"/>
        <dbReference type="ChEBI" id="CHEBI:57384"/>
        <dbReference type="ChEBI" id="CHEBI:57783"/>
        <dbReference type="ChEBI" id="CHEBI:58349"/>
        <dbReference type="ChEBI" id="CHEBI:87848"/>
        <dbReference type="ChEBI" id="CHEBI:142236"/>
        <dbReference type="EC" id="2.3.1.292"/>
    </reaction>
</comment>
<comment type="catalytic activity">
    <reaction evidence="2">
        <text>docosanoyl-[(phenol)carboxyphthiodiolenone synthase] + 2 (S)-methylmalonyl-CoA + 3 malonyl-CoA + 5 NADPH + 10 H(+) = C34-carboxyphthiodiolenone-[(phenol)carboxyphthiodiolenone synthase] + 5 CO2 + 5 NADP(+) + 5 CoA + 2 H2O</text>
        <dbReference type="Rhea" id="RHEA:57752"/>
        <dbReference type="Rhea" id="RHEA-COMP:14987"/>
        <dbReference type="Rhea" id="RHEA-COMP:14988"/>
        <dbReference type="ChEBI" id="CHEBI:15377"/>
        <dbReference type="ChEBI" id="CHEBI:15378"/>
        <dbReference type="ChEBI" id="CHEBI:16526"/>
        <dbReference type="ChEBI" id="CHEBI:57287"/>
        <dbReference type="ChEBI" id="CHEBI:57327"/>
        <dbReference type="ChEBI" id="CHEBI:57384"/>
        <dbReference type="ChEBI" id="CHEBI:57783"/>
        <dbReference type="ChEBI" id="CHEBI:58349"/>
        <dbReference type="ChEBI" id="CHEBI:142237"/>
        <dbReference type="ChEBI" id="CHEBI:142238"/>
        <dbReference type="EC" id="2.3.1.292"/>
    </reaction>
</comment>
<comment type="catalytic activity">
    <reaction evidence="2">
        <text>17-(4-hydroxyphenyl)heptadecanoyl-[(phenol)carboxyphthiodiolenone synthase] + 2 (S)-methylmalonyl-CoA + 3 malonyl-CoA + 5 NADPH + 10 H(+) = C35-(phenol)carboxyphthiodiolenone-[(phenol)carboxyphthiodiolenone synthase] + 5 CO2 + 5 NADP(+) + 5 CoA + 2 H2O</text>
        <dbReference type="Rhea" id="RHEA:57756"/>
        <dbReference type="Rhea" id="RHEA-COMP:14272"/>
        <dbReference type="Rhea" id="RHEA-COMP:14989"/>
        <dbReference type="ChEBI" id="CHEBI:15377"/>
        <dbReference type="ChEBI" id="CHEBI:15378"/>
        <dbReference type="ChEBI" id="CHEBI:16526"/>
        <dbReference type="ChEBI" id="CHEBI:57287"/>
        <dbReference type="ChEBI" id="CHEBI:57327"/>
        <dbReference type="ChEBI" id="CHEBI:57384"/>
        <dbReference type="ChEBI" id="CHEBI:57783"/>
        <dbReference type="ChEBI" id="CHEBI:58349"/>
        <dbReference type="ChEBI" id="CHEBI:133300"/>
        <dbReference type="ChEBI" id="CHEBI:142259"/>
        <dbReference type="EC" id="2.3.1.292"/>
    </reaction>
</comment>
<comment type="catalytic activity">
    <reaction evidence="2">
        <text>19-(4-hydroxyphenyl)nonadecanoyl-[(phenol)carboxyphthiodiolenone synthase] + 2 (S)-methylmalonyl-CoA + 3 malonyl-CoA + 5 NADPH + 10 H(+) = C37-(phenol)carboxyphthiodiolenone-[(phenol)carboxyphthiodiolenone synthase] + 5 CO2 + 5 NADP(+) + 5 CoA + 2 H2O</text>
        <dbReference type="Rhea" id="RHEA:57760"/>
        <dbReference type="Rhea" id="RHEA-COMP:14273"/>
        <dbReference type="Rhea" id="RHEA-COMP:14990"/>
        <dbReference type="ChEBI" id="CHEBI:15377"/>
        <dbReference type="ChEBI" id="CHEBI:15378"/>
        <dbReference type="ChEBI" id="CHEBI:16526"/>
        <dbReference type="ChEBI" id="CHEBI:57287"/>
        <dbReference type="ChEBI" id="CHEBI:57327"/>
        <dbReference type="ChEBI" id="CHEBI:57384"/>
        <dbReference type="ChEBI" id="CHEBI:57783"/>
        <dbReference type="ChEBI" id="CHEBI:58349"/>
        <dbReference type="ChEBI" id="CHEBI:133301"/>
        <dbReference type="ChEBI" id="CHEBI:142260"/>
        <dbReference type="EC" id="2.3.1.292"/>
    </reaction>
</comment>
<comment type="cofactor">
    <cofactor evidence="2">
        <name>NADP(+)</name>
        <dbReference type="ChEBI" id="CHEBI:58349"/>
    </cofactor>
</comment>
<comment type="cofactor">
    <cofactor evidence="1">
        <name>pantetheine 4'-phosphate</name>
        <dbReference type="ChEBI" id="CHEBI:47942"/>
    </cofactor>
    <text evidence="1">Binds 1 phosphopantetheine covalently.</text>
</comment>
<comment type="pathway">
    <text evidence="6">Lipid metabolism; fatty acid biosynthesis.</text>
</comment>
<comment type="disruption phenotype">
    <text evidence="6">Disruption of the pps gene cluster abolishes the production of both phthiocerol and phenolphthiocerol derivatives.</text>
</comment>
<proteinExistence type="evidence at protein level"/>
<evidence type="ECO:0000250" key="1"/>
<evidence type="ECO:0000250" key="2">
    <source>
        <dbReference type="UniProtKB" id="P9WQE5"/>
    </source>
</evidence>
<evidence type="ECO:0000255" key="3">
    <source>
        <dbReference type="PROSITE-ProRule" id="PRU00258"/>
    </source>
</evidence>
<evidence type="ECO:0000255" key="4">
    <source>
        <dbReference type="PROSITE-ProRule" id="PRU01348"/>
    </source>
</evidence>
<evidence type="ECO:0000255" key="5">
    <source>
        <dbReference type="PROSITE-ProRule" id="PRU10022"/>
    </source>
</evidence>
<evidence type="ECO:0000269" key="6">
    <source>
    </source>
</evidence>
<evidence type="ECO:0000305" key="7"/>
<keyword id="KW-0276">Fatty acid metabolism</keyword>
<keyword id="KW-0443">Lipid metabolism</keyword>
<keyword id="KW-0511">Multifunctional enzyme</keyword>
<keyword id="KW-0521">NADP</keyword>
<keyword id="KW-0560">Oxidoreductase</keyword>
<keyword id="KW-0596">Phosphopantetheine</keyword>
<keyword id="KW-0597">Phosphoprotein</keyword>
<keyword id="KW-1185">Reference proteome</keyword>
<keyword id="KW-0677">Repeat</keyword>
<keyword id="KW-0808">Transferase</keyword>
<reference key="1">
    <citation type="journal article" date="2003" name="Proc. Natl. Acad. Sci. U.S.A.">
        <title>The complete genome sequence of Mycobacterium bovis.</title>
        <authorList>
            <person name="Garnier T."/>
            <person name="Eiglmeier K."/>
            <person name="Camus J.-C."/>
            <person name="Medina N."/>
            <person name="Mansoor H."/>
            <person name="Pryor M."/>
            <person name="Duthoy S."/>
            <person name="Grondin S."/>
            <person name="Lacroix C."/>
            <person name="Monsempe C."/>
            <person name="Simon S."/>
            <person name="Harris B."/>
            <person name="Atkin R."/>
            <person name="Doggett J."/>
            <person name="Mayes R."/>
            <person name="Keating L."/>
            <person name="Wheeler P.R."/>
            <person name="Parkhill J."/>
            <person name="Barrell B.G."/>
            <person name="Cole S.T."/>
            <person name="Gordon S.V."/>
            <person name="Hewinson R.G."/>
        </authorList>
    </citation>
    <scope>NUCLEOTIDE SEQUENCE [LARGE SCALE GENOMIC DNA]</scope>
    <source>
        <strain>ATCC BAA-935 / AF2122/97</strain>
    </source>
</reference>
<reference key="2">
    <citation type="journal article" date="2017" name="Genome Announc.">
        <title>Updated reference genome sequence and annotation of Mycobacterium bovis AF2122/97.</title>
        <authorList>
            <person name="Malone K.M."/>
            <person name="Farrell D."/>
            <person name="Stuber T.P."/>
            <person name="Schubert O.T."/>
            <person name="Aebersold R."/>
            <person name="Robbe-Austerman S."/>
            <person name="Gordon S.V."/>
        </authorList>
    </citation>
    <scope>NUCLEOTIDE SEQUENCE [LARGE SCALE GENOMIC DNA]</scope>
    <scope>GENOME REANNOTATION</scope>
    <source>
        <strain>ATCC BAA-935 / AF2122/97</strain>
    </source>
</reference>
<reference key="3">
    <citation type="journal article" date="1997" name="J. Biol. Chem.">
        <title>Gene knockout reveals a novel gene cluster for the synthesis of a class of cell wall lipids unique to pathogenic mycobacteria.</title>
        <authorList>
            <person name="Azad A.K."/>
            <person name="Sirakova T.D."/>
            <person name="Fernandes N.D."/>
            <person name="Kolattukudy P.E."/>
        </authorList>
    </citation>
    <scope>FUNCTION IN THE PHTHIOCEROL AND PHENOLPHTHIOCEROL BIOSYNTHESIS</scope>
    <scope>PATHWAY</scope>
    <scope>DISRUPTION PHENOTYPE</scope>
    <source>
        <strain>BCG</strain>
    </source>
</reference>
<name>PPSB_MYCBO</name>
<gene>
    <name type="primary">ppsB</name>
    <name type="ordered locus">BQ2027_MB2957</name>
</gene>
<feature type="chain" id="PRO_0000406946" description="Phenolphthiocerol/phthiocerol polyketide synthase subunit B">
    <location>
        <begin position="1"/>
        <end position="1538"/>
    </location>
</feature>
<feature type="domain" description="Ketosynthase family 3 (KS3)" evidence="4">
    <location>
        <begin position="33"/>
        <end position="455"/>
    </location>
</feature>
<feature type="domain" description="Carrier" evidence="3">
    <location>
        <begin position="1423"/>
        <end position="1498"/>
    </location>
</feature>
<feature type="region of interest" description="Acyltransferase" evidence="1">
    <location>
        <begin position="553"/>
        <end position="882"/>
    </location>
</feature>
<feature type="region of interest" description="Beta-ketoacyl reductase" evidence="1">
    <location>
        <begin position="1153"/>
        <end position="1328"/>
    </location>
</feature>
<feature type="active site" description="For beta-ketoacyl synthase activity" evidence="4">
    <location>
        <position position="205"/>
    </location>
</feature>
<feature type="active site" description="For beta-ketoacyl synthase activity" evidence="4">
    <location>
        <position position="340"/>
    </location>
</feature>
<feature type="active site" description="For beta-ketoacyl synthase activity" evidence="4">
    <location>
        <position position="377"/>
    </location>
</feature>
<feature type="active site" description="For malonyltransferase activity" evidence="5">
    <location>
        <position position="649"/>
    </location>
</feature>
<feature type="binding site" evidence="1">
    <location>
        <begin position="1153"/>
        <end position="1196"/>
    </location>
    <ligand>
        <name>NADP(+)</name>
        <dbReference type="ChEBI" id="CHEBI:58349"/>
    </ligand>
</feature>
<feature type="modified residue" description="O-(pantetheine 4'-phosphoryl)serine" evidence="3">
    <location>
        <position position="1458"/>
    </location>
</feature>
<accession>Q7TXL9</accession>
<accession>A0A1R3Y310</accession>
<accession>X2BM25</accession>
<organism>
    <name type="scientific">Mycobacterium bovis (strain ATCC BAA-935 / AF2122/97)</name>
    <dbReference type="NCBI Taxonomy" id="233413"/>
    <lineage>
        <taxon>Bacteria</taxon>
        <taxon>Bacillati</taxon>
        <taxon>Actinomycetota</taxon>
        <taxon>Actinomycetes</taxon>
        <taxon>Mycobacteriales</taxon>
        <taxon>Mycobacteriaceae</taxon>
        <taxon>Mycobacterium</taxon>
        <taxon>Mycobacterium tuberculosis complex</taxon>
    </lineage>
</organism>
<sequence>MMRTAFSRISGMTAQQRTSLADEFDRVSRIAVAEPVAVVGIGCRFPGDVDGPESFWDFLVAGRNAISTVPADRWDAEAFYHPDPLTPGRMTTKWGGFVPDVAGFDAEFFGITPREAAAMDPQQRMLLEVAWEALEHAGIPPDSLGGTRTAVMMGVYFNEYQSMLAASPQNVDAYSGTGNAHSITVGRISYLLGLRGPAVAVDTACSSSLVAVHLACQSLRLRETDLALAGGVSITLRPETQIAISAWGLLSPQGRCAAFDAAADGFVRGEGAGVVVLKRLTDAVRDGDQVLAVVRGSAVNQDGRSNGVTAPNTAAQCDVIADALRSGDVAPDSVNYVEAHGTGTVLGDPIEFEALAATYGHGGDACALGAVKTNIGHLEAAAGIAGFIKATLAVQRATIPPNLHFSQWNPAIDAASTRFFVPTQNSPWPTAEGPRRAAVSSFGLGGTNAHVIIEQGSELAPVSEGGEDTGVSTLVVTGKTAQRMAATAQVLADWMEGPGAEVAVADVAHTVNHHRARQATFGTVVARDRAQAIAGLRALAAGQHAPGVVSHQDGSPGPGTVFVYSGRGSQWAGMGRQLLADEPAFAAAVAELEPVFVEQAGFSLRDVIATGKELVGIEQIQLGLIGMQLTLTELWRSYGVQPDLVIGHSMGEVAAAVVAGALTPAEGLRVTATRARLMAPLSGQGGMALLGLDAAATEALIADYPQVTVGIYNSPRQTVIAGPTEQIDELIARVRAQNRFASRVNIEVAPHNPAMDALQPAMRSELADLTPRTPTIGIISTTYADLHTQPIFDAEHWATNMRNPVRFQQAIASAGSGADGAYHTFIEISAHPLLTQAIADTLEDAHRPTKSAAKYLSIGTLQRDADDTVTFRTNLYTADIAHPPHTCHPPEPHPTIPTTPWQHTHHWIATTHPSTAAPEDPGSNKVVVNGQSTSESRALEDWCHQLAWPIRPAVSADPPSTAAWLVVADNELCHELARAADSRVDSLSPPALAAGSDPAALLDALRGVDNVLYAPPVPGELLDIESAYQVFHATRRLAAAMVASSATAISPPKLFIMTRNAQPISEGDRANPGHAVLWGLGRSLALEHPEIWGGIIDLDDSMPAELAVRHVLTAAHGTDGEDQVVYRSGARHVPRLQRRTLPGKPVTLNADASQLVIGATGNIGPHLIRQLARMGAKTIVAMARKPGALDELTQCLAATGTDLIAVAADATDPAAMQTLFDRFGTELPPLEGIYLAAFAGRPALLSEMTDDDVTTMFRPKLDALALLHRLSLKSPVRHFVLFSSVSGLLGSRWLAHYTATSAFLDSFAGARRTMGLPATVVDWGLWKSLADVQKDATQISAESGLQPMADEVAIGALPLVMNPDAAVATVVVAADWPLLAAAYRTRGALRIVDDLLPAPEDVGKGESEFRTSLRSCPAEKRRDMLFDHVGALAATVMGMPPTEPLDPSAGFFQLGMDSLMSVTLQRALSESLGEFLPASVVFDYPTVYSLTDYLATVLPELLEIGATAVATQQATDSYHELTEAELLEQLSERLRGTQ</sequence>